<gene>
    <name evidence="4" type="ordered locus">At3g04930</name>
    <name evidence="5" type="ORF">T9J14.12</name>
</gene>
<feature type="chain" id="PRO_0000436984" description="Probable transcription factor At3g04930">
    <location>
        <begin position="1"/>
        <end position="456"/>
    </location>
</feature>
<feature type="region of interest" description="Disordered" evidence="2">
    <location>
        <begin position="1"/>
        <end position="71"/>
    </location>
</feature>
<feature type="compositionally biased region" description="Acidic residues" evidence="2">
    <location>
        <begin position="15"/>
        <end position="38"/>
    </location>
</feature>
<feature type="compositionally biased region" description="Acidic residues" evidence="2">
    <location>
        <begin position="50"/>
        <end position="62"/>
    </location>
</feature>
<feature type="modified residue" description="Phosphoserine" evidence="1">
    <location>
        <position position="16"/>
    </location>
</feature>
<feature type="splice variant" id="VSP_058468" description="In isoform 2.">
    <original>GGGGGGGGHGFGSLSPMFTRPFNFGFGVEGGGNKAVA</original>
    <variation>WWWWWWWSWFWLAKPHVYTAVQFRFWCRGRRKQGGCR</variation>
    <location>
        <begin position="380"/>
        <end position="416"/>
    </location>
</feature>
<feature type="splice variant" id="VSP_058469" description="In isoform 3.">
    <original>HGFGSLSPM</original>
    <variation>GGFVYNLLY</variation>
    <location>
        <begin position="388"/>
        <end position="396"/>
    </location>
</feature>
<feature type="splice variant" id="VSP_058470" description="In isoform 3.">
    <location>
        <begin position="397"/>
        <end position="456"/>
    </location>
</feature>
<feature type="splice variant" id="VSP_058471" description="In isoform 2.">
    <location>
        <begin position="417"/>
        <end position="456"/>
    </location>
</feature>
<accession>Q9CAV7</accession>
<accession>F4J625</accession>
<accession>Q8VYQ3</accession>
<proteinExistence type="evidence at protein level"/>
<comment type="interaction">
    <interactant intactId="EBI-15198431">
        <id>Q9CAV7</id>
    </interactant>
    <interactant intactId="EBI-15193831">
        <id>F4K5T4</id>
        <label>At5g28040</label>
    </interactant>
    <organismsDiffer>false</organismsDiffer>
    <experiments>4</experiments>
</comment>
<comment type="interaction">
    <interactant intactId="EBI-15198431">
        <id>Q9CAV7</id>
    </interactant>
    <interactant intactId="EBI-4445335">
        <id>Q5XEN5</id>
        <label>MBD1</label>
    </interactant>
    <organismsDiffer>false</organismsDiffer>
    <experiments>3</experiments>
</comment>
<comment type="interaction">
    <interactant intactId="EBI-15198431">
        <id>Q9CAV7</id>
    </interactant>
    <interactant intactId="EBI-4425826">
        <id>Q8LA53</id>
        <label>MBD2</label>
    </interactant>
    <organismsDiffer>false</organismsDiffer>
    <experiments>5</experiments>
</comment>
<comment type="alternative products">
    <event type="alternative splicing"/>
    <isoform>
        <id>Q9CAV7-1</id>
        <name>1</name>
        <sequence type="displayed"/>
    </isoform>
    <isoform>
        <id>Q9CAV7-2</id>
        <name>2</name>
        <sequence type="described" ref="VSP_058468 VSP_058471"/>
    </isoform>
    <isoform>
        <id>Q9CAV7-3</id>
        <name>3</name>
        <sequence type="described" ref="VSP_058469 VSP_058470"/>
    </isoform>
</comment>
<comment type="miscellaneous">
    <molecule>Isoform 2</molecule>
    <text evidence="3">May be due to the presence of a micro intron.</text>
</comment>
<comment type="similarity">
    <text evidence="3">Belongs to the GeBP family.</text>
</comment>
<comment type="online information" name="Plant Transcription Factor Database">
    <link uri="https://planttfdb.gao-lab.org/family.php?fam=GeBP#family_intro"/>
</comment>
<keyword id="KW-0025">Alternative splicing</keyword>
<keyword id="KW-0597">Phosphoprotein</keyword>
<keyword id="KW-1185">Reference proteome</keyword>
<keyword id="KW-0804">Transcription</keyword>
<keyword id="KW-0805">Transcription regulation</keyword>
<name>STKLJ_ARATH</name>
<evidence type="ECO:0000250" key="1">
    <source>
        <dbReference type="UniProtKB" id="F4K5T4"/>
    </source>
</evidence>
<evidence type="ECO:0000256" key="2">
    <source>
        <dbReference type="SAM" id="MobiDB-lite"/>
    </source>
</evidence>
<evidence type="ECO:0000305" key="3"/>
<evidence type="ECO:0000312" key="4">
    <source>
        <dbReference type="Araport" id="AT3G04930"/>
    </source>
</evidence>
<evidence type="ECO:0000312" key="5">
    <source>
        <dbReference type="EMBL" id="AAG51410.1"/>
    </source>
</evidence>
<reference key="1">
    <citation type="journal article" date="2000" name="Nature">
        <title>Sequence and analysis of chromosome 3 of the plant Arabidopsis thaliana.</title>
        <authorList>
            <person name="Salanoubat M."/>
            <person name="Lemcke K."/>
            <person name="Rieger M."/>
            <person name="Ansorge W."/>
            <person name="Unseld M."/>
            <person name="Fartmann B."/>
            <person name="Valle G."/>
            <person name="Bloecker H."/>
            <person name="Perez-Alonso M."/>
            <person name="Obermaier B."/>
            <person name="Delseny M."/>
            <person name="Boutry M."/>
            <person name="Grivell L.A."/>
            <person name="Mache R."/>
            <person name="Puigdomenech P."/>
            <person name="De Simone V."/>
            <person name="Choisne N."/>
            <person name="Artiguenave F."/>
            <person name="Robert C."/>
            <person name="Brottier P."/>
            <person name="Wincker P."/>
            <person name="Cattolico L."/>
            <person name="Weissenbach J."/>
            <person name="Saurin W."/>
            <person name="Quetier F."/>
            <person name="Schaefer M."/>
            <person name="Mueller-Auer S."/>
            <person name="Gabel C."/>
            <person name="Fuchs M."/>
            <person name="Benes V."/>
            <person name="Wurmbach E."/>
            <person name="Drzonek H."/>
            <person name="Erfle H."/>
            <person name="Jordan N."/>
            <person name="Bangert S."/>
            <person name="Wiedelmann R."/>
            <person name="Kranz H."/>
            <person name="Voss H."/>
            <person name="Holland R."/>
            <person name="Brandt P."/>
            <person name="Nyakatura G."/>
            <person name="Vezzi A."/>
            <person name="D'Angelo M."/>
            <person name="Pallavicini A."/>
            <person name="Toppo S."/>
            <person name="Simionati B."/>
            <person name="Conrad A."/>
            <person name="Hornischer K."/>
            <person name="Kauer G."/>
            <person name="Loehnert T.-H."/>
            <person name="Nordsiek G."/>
            <person name="Reichelt J."/>
            <person name="Scharfe M."/>
            <person name="Schoen O."/>
            <person name="Bargues M."/>
            <person name="Terol J."/>
            <person name="Climent J."/>
            <person name="Navarro P."/>
            <person name="Collado C."/>
            <person name="Perez-Perez A."/>
            <person name="Ottenwaelder B."/>
            <person name="Duchemin D."/>
            <person name="Cooke R."/>
            <person name="Laudie M."/>
            <person name="Berger-Llauro C."/>
            <person name="Purnelle B."/>
            <person name="Masuy D."/>
            <person name="de Haan M."/>
            <person name="Maarse A.C."/>
            <person name="Alcaraz J.-P."/>
            <person name="Cottet A."/>
            <person name="Casacuberta E."/>
            <person name="Monfort A."/>
            <person name="Argiriou A."/>
            <person name="Flores M."/>
            <person name="Liguori R."/>
            <person name="Vitale D."/>
            <person name="Mannhaupt G."/>
            <person name="Haase D."/>
            <person name="Schoof H."/>
            <person name="Rudd S."/>
            <person name="Zaccaria P."/>
            <person name="Mewes H.-W."/>
            <person name="Mayer K.F.X."/>
            <person name="Kaul S."/>
            <person name="Town C.D."/>
            <person name="Koo H.L."/>
            <person name="Tallon L.J."/>
            <person name="Jenkins J."/>
            <person name="Rooney T."/>
            <person name="Rizzo M."/>
            <person name="Walts A."/>
            <person name="Utterback T."/>
            <person name="Fujii C.Y."/>
            <person name="Shea T.P."/>
            <person name="Creasy T.H."/>
            <person name="Haas B."/>
            <person name="Maiti R."/>
            <person name="Wu D."/>
            <person name="Peterson J."/>
            <person name="Van Aken S."/>
            <person name="Pai G."/>
            <person name="Militscher J."/>
            <person name="Sellers P."/>
            <person name="Gill J.E."/>
            <person name="Feldblyum T.V."/>
            <person name="Preuss D."/>
            <person name="Lin X."/>
            <person name="Nierman W.C."/>
            <person name="Salzberg S.L."/>
            <person name="White O."/>
            <person name="Venter J.C."/>
            <person name="Fraser C.M."/>
            <person name="Kaneko T."/>
            <person name="Nakamura Y."/>
            <person name="Sato S."/>
            <person name="Kato T."/>
            <person name="Asamizu E."/>
            <person name="Sasamoto S."/>
            <person name="Kimura T."/>
            <person name="Idesawa K."/>
            <person name="Kawashima K."/>
            <person name="Kishida Y."/>
            <person name="Kiyokawa C."/>
            <person name="Kohara M."/>
            <person name="Matsumoto M."/>
            <person name="Matsuno A."/>
            <person name="Muraki A."/>
            <person name="Nakayama S."/>
            <person name="Nakazaki N."/>
            <person name="Shinpo S."/>
            <person name="Takeuchi C."/>
            <person name="Wada T."/>
            <person name="Watanabe A."/>
            <person name="Yamada M."/>
            <person name="Yasuda M."/>
            <person name="Tabata S."/>
        </authorList>
    </citation>
    <scope>NUCLEOTIDE SEQUENCE [LARGE SCALE GENOMIC DNA]</scope>
    <source>
        <strain>cv. Columbia</strain>
    </source>
</reference>
<reference key="2">
    <citation type="journal article" date="2017" name="Plant J.">
        <title>Araport11: a complete reannotation of the Arabidopsis thaliana reference genome.</title>
        <authorList>
            <person name="Cheng C.Y."/>
            <person name="Krishnakumar V."/>
            <person name="Chan A.P."/>
            <person name="Thibaud-Nissen F."/>
            <person name="Schobel S."/>
            <person name="Town C.D."/>
        </authorList>
    </citation>
    <scope>GENOME REANNOTATION</scope>
    <source>
        <strain>cv. Columbia</strain>
    </source>
</reference>
<reference key="3">
    <citation type="journal article" date="2003" name="Science">
        <title>Empirical analysis of transcriptional activity in the Arabidopsis genome.</title>
        <authorList>
            <person name="Yamada K."/>
            <person name="Lim J."/>
            <person name="Dale J.M."/>
            <person name="Chen H."/>
            <person name="Shinn P."/>
            <person name="Palm C.J."/>
            <person name="Southwick A.M."/>
            <person name="Wu H.C."/>
            <person name="Kim C.J."/>
            <person name="Nguyen M."/>
            <person name="Pham P.K."/>
            <person name="Cheuk R.F."/>
            <person name="Karlin-Newmann G."/>
            <person name="Liu S.X."/>
            <person name="Lam B."/>
            <person name="Sakano H."/>
            <person name="Wu T."/>
            <person name="Yu G."/>
            <person name="Miranda M."/>
            <person name="Quach H.L."/>
            <person name="Tripp M."/>
            <person name="Chang C.H."/>
            <person name="Lee J.M."/>
            <person name="Toriumi M.J."/>
            <person name="Chan M.M."/>
            <person name="Tang C.C."/>
            <person name="Onodera C.S."/>
            <person name="Deng J.M."/>
            <person name="Akiyama K."/>
            <person name="Ansari Y."/>
            <person name="Arakawa T."/>
            <person name="Banh J."/>
            <person name="Banno F."/>
            <person name="Bowser L."/>
            <person name="Brooks S.Y."/>
            <person name="Carninci P."/>
            <person name="Chao Q."/>
            <person name="Choy N."/>
            <person name="Enju A."/>
            <person name="Goldsmith A.D."/>
            <person name="Gurjal M."/>
            <person name="Hansen N.F."/>
            <person name="Hayashizaki Y."/>
            <person name="Johnson-Hopson C."/>
            <person name="Hsuan V.W."/>
            <person name="Iida K."/>
            <person name="Karnes M."/>
            <person name="Khan S."/>
            <person name="Koesema E."/>
            <person name="Ishida J."/>
            <person name="Jiang P.X."/>
            <person name="Jones T."/>
            <person name="Kawai J."/>
            <person name="Kamiya A."/>
            <person name="Meyers C."/>
            <person name="Nakajima M."/>
            <person name="Narusaka M."/>
            <person name="Seki M."/>
            <person name="Sakurai T."/>
            <person name="Satou M."/>
            <person name="Tamse R."/>
            <person name="Vaysberg M."/>
            <person name="Wallender E.K."/>
            <person name="Wong C."/>
            <person name="Yamamura Y."/>
            <person name="Yuan S."/>
            <person name="Shinozaki K."/>
            <person name="Davis R.W."/>
            <person name="Theologis A."/>
            <person name="Ecker J.R."/>
        </authorList>
    </citation>
    <scope>NUCLEOTIDE SEQUENCE [LARGE SCALE MRNA] (ISOFORM 2)</scope>
    <source>
        <strain>cv. Columbia</strain>
    </source>
</reference>
<reference key="4">
    <citation type="submission" date="2009-03" db="EMBL/GenBank/DDBJ databases">
        <title>ORF cloning and analysis of Arabidopsis transcription factor genes.</title>
        <authorList>
            <person name="Fujita M."/>
            <person name="Mizukado S."/>
            <person name="Seki M."/>
            <person name="Shinozaki K."/>
            <person name="Mitsuda N."/>
            <person name="Takiguchi Y."/>
            <person name="Takagi M."/>
        </authorList>
    </citation>
    <scope>NUCLEOTIDE SEQUENCE [LARGE SCALE MRNA]</scope>
</reference>
<reference key="5">
    <citation type="journal article" date="2003" name="Plant J.">
        <title>GeBP, the first member of a new gene family in Arabidopsis, encodes a nuclear protein with DNA-binding activity and is regulated by KNAT1.</title>
        <authorList>
            <person name="Curaba J."/>
            <person name="Herzog M."/>
            <person name="Vachon G."/>
        </authorList>
    </citation>
    <scope>GENE FAMILY</scope>
</reference>
<dbReference type="EMBL" id="AC009465">
    <property type="protein sequence ID" value="AAG51410.1"/>
    <property type="molecule type" value="Genomic_DNA"/>
</dbReference>
<dbReference type="EMBL" id="CP002686">
    <property type="protein sequence ID" value="AEE74159.1"/>
    <property type="molecule type" value="Genomic_DNA"/>
</dbReference>
<dbReference type="EMBL" id="CP002686">
    <property type="protein sequence ID" value="AEE74160.1"/>
    <property type="molecule type" value="Genomic_DNA"/>
</dbReference>
<dbReference type="EMBL" id="AY070136">
    <property type="protein sequence ID" value="AAL47486.1"/>
    <property type="molecule type" value="mRNA"/>
</dbReference>
<dbReference type="EMBL" id="AY079045">
    <property type="protein sequence ID" value="AAL79595.1"/>
    <property type="molecule type" value="mRNA"/>
</dbReference>
<dbReference type="EMBL" id="AB493601">
    <property type="protein sequence ID" value="BAH30439.1"/>
    <property type="molecule type" value="mRNA"/>
</dbReference>
<dbReference type="RefSeq" id="NP_001189809.1">
    <molecule id="Q9CAV7-3"/>
    <property type="nucleotide sequence ID" value="NM_001202880.1"/>
</dbReference>
<dbReference type="RefSeq" id="NP_187144.1">
    <molecule id="Q9CAV7-1"/>
    <property type="nucleotide sequence ID" value="NM_111365.5"/>
</dbReference>
<dbReference type="SMR" id="Q9CAV7"/>
<dbReference type="FunCoup" id="Q9CAV7">
    <property type="interactions" value="1733"/>
</dbReference>
<dbReference type="IntAct" id="Q9CAV7">
    <property type="interactions" value="6"/>
</dbReference>
<dbReference type="STRING" id="3702.Q9CAV7"/>
<dbReference type="GlyGen" id="Q9CAV7">
    <property type="glycosylation" value="1 site"/>
</dbReference>
<dbReference type="iPTMnet" id="Q9CAV7"/>
<dbReference type="PaxDb" id="3702-AT3G04930.1"/>
<dbReference type="ProteomicsDB" id="228302">
    <molecule id="Q9CAV7-1"/>
</dbReference>
<dbReference type="EnsemblPlants" id="AT3G04930.1">
    <molecule id="Q9CAV7-1"/>
    <property type="protein sequence ID" value="AT3G04930.1"/>
    <property type="gene ID" value="AT3G04930"/>
</dbReference>
<dbReference type="EnsemblPlants" id="AT3G04930.2">
    <molecule id="Q9CAV7-3"/>
    <property type="protein sequence ID" value="AT3G04930.2"/>
    <property type="gene ID" value="AT3G04930"/>
</dbReference>
<dbReference type="GeneID" id="819653"/>
<dbReference type="Gramene" id="AT3G04930.1">
    <molecule id="Q9CAV7-1"/>
    <property type="protein sequence ID" value="AT3G04930.1"/>
    <property type="gene ID" value="AT3G04930"/>
</dbReference>
<dbReference type="Gramene" id="AT3G04930.2">
    <molecule id="Q9CAV7-3"/>
    <property type="protein sequence ID" value="AT3G04930.2"/>
    <property type="gene ID" value="AT3G04930"/>
</dbReference>
<dbReference type="KEGG" id="ath:AT3G04930"/>
<dbReference type="Araport" id="AT3G04930"/>
<dbReference type="TAIR" id="AT3G04930"/>
<dbReference type="eggNOG" id="ENOG502QUAW">
    <property type="taxonomic scope" value="Eukaryota"/>
</dbReference>
<dbReference type="HOGENOM" id="CLU_032856_0_0_1"/>
<dbReference type="InParanoid" id="Q9CAV7"/>
<dbReference type="OMA" id="LSPMFTR"/>
<dbReference type="PhylomeDB" id="Q9CAV7"/>
<dbReference type="PRO" id="PR:Q9CAV7"/>
<dbReference type="Proteomes" id="UP000006548">
    <property type="component" value="Chromosome 3"/>
</dbReference>
<dbReference type="ExpressionAtlas" id="Q9CAV7">
    <property type="expression patterns" value="baseline and differential"/>
</dbReference>
<dbReference type="GO" id="GO:0006355">
    <property type="term" value="P:regulation of DNA-templated transcription"/>
    <property type="evidence" value="ECO:0000304"/>
    <property type="project" value="TAIR"/>
</dbReference>
<dbReference type="InterPro" id="IPR007592">
    <property type="entry name" value="GEBP"/>
</dbReference>
<dbReference type="InterPro" id="IPR053932">
    <property type="entry name" value="GeBP-like_DBD"/>
</dbReference>
<dbReference type="PANTHER" id="PTHR31662">
    <property type="entry name" value="BNAANNG10740D PROTEIN-RELATED"/>
    <property type="match status" value="1"/>
</dbReference>
<dbReference type="PANTHER" id="PTHR31662:SF103">
    <property type="entry name" value="MYB_SANT-LIKE DOMAIN-CONTAINING PROTEIN"/>
    <property type="match status" value="1"/>
</dbReference>
<dbReference type="Pfam" id="PF04504">
    <property type="entry name" value="GeBP-like_DBD"/>
    <property type="match status" value="1"/>
</dbReference>
<sequence length="456" mass="49707">MTSDHRDALFSLELESPDPDEGGVADGGESDTDEDLRDNDDVVMPGTNEAEAEDDDPEEEDLNSPSTSSLPMVSTISATAVVSGTPTATSSTGAVTVALPAGSAVPVSVIPVDSDPKWHRMTEIVHQRPPIDDSRRLFQRLWTDEDEIELLRGFLDYMTMHRGSSSHPPDTAPFYEQIKSKLQLDFNKNQLVEKLRRLKKKYRNVMSKISSGKEVFFKSPHDQSTFEISRKIWNQTGKIIGFEDNNVMDFEETNNHHNTTNGNYSTFNSPSSNPTLELDSENGIEKKLTMSSSSVSRKRSRSRIGKIEEDNKPVITPSDGPIASNVNLNEAAAVGIGGNLGGLIEETVKNCVSPVIKEMMNGTTSMMMAAMGGGFPGLGGGGGGGGGHGFGSLSPMFTRPFNFGFGVEGGGNKAVADERWRKQQILELEVYSRRLELVQEQIRTTLNELKTMPSGI</sequence>
<organism>
    <name type="scientific">Arabidopsis thaliana</name>
    <name type="common">Mouse-ear cress</name>
    <dbReference type="NCBI Taxonomy" id="3702"/>
    <lineage>
        <taxon>Eukaryota</taxon>
        <taxon>Viridiplantae</taxon>
        <taxon>Streptophyta</taxon>
        <taxon>Embryophyta</taxon>
        <taxon>Tracheophyta</taxon>
        <taxon>Spermatophyta</taxon>
        <taxon>Magnoliopsida</taxon>
        <taxon>eudicotyledons</taxon>
        <taxon>Gunneridae</taxon>
        <taxon>Pentapetalae</taxon>
        <taxon>rosids</taxon>
        <taxon>malvids</taxon>
        <taxon>Brassicales</taxon>
        <taxon>Brassicaceae</taxon>
        <taxon>Camelineae</taxon>
        <taxon>Arabidopsis</taxon>
    </lineage>
</organism>
<protein>
    <recommendedName>
        <fullName evidence="3">Probable transcription factor At3g04930</fullName>
    </recommendedName>
    <alternativeName>
        <fullName evidence="3">Storekeeper-like protein At3g04930</fullName>
    </alternativeName>
</protein>